<keyword id="KW-0067">ATP-binding</keyword>
<keyword id="KW-0418">Kinase</keyword>
<keyword id="KW-0460">Magnesium</keyword>
<keyword id="KW-0479">Metal-binding</keyword>
<keyword id="KW-0547">Nucleotide-binding</keyword>
<keyword id="KW-0784">Thiamine biosynthesis</keyword>
<keyword id="KW-0808">Transferase</keyword>
<protein>
    <recommendedName>
        <fullName evidence="1">Hydroxyethylthiazole kinase</fullName>
        <ecNumber evidence="1">2.7.1.50</ecNumber>
    </recommendedName>
    <alternativeName>
        <fullName evidence="1">4-methyl-5-beta-hydroxyethylthiazole kinase</fullName>
        <shortName evidence="1">TH kinase</shortName>
        <shortName evidence="1">Thz kinase</shortName>
    </alternativeName>
</protein>
<reference key="1">
    <citation type="journal article" date="2005" name="Nucleic Acids Res.">
        <title>The genome sequence of Salmonella enterica serovar Choleraesuis, a highly invasive and resistant zoonotic pathogen.</title>
        <authorList>
            <person name="Chiu C.-H."/>
            <person name="Tang P."/>
            <person name="Chu C."/>
            <person name="Hu S."/>
            <person name="Bao Q."/>
            <person name="Yu J."/>
            <person name="Chou Y.-Y."/>
            <person name="Wang H.-S."/>
            <person name="Lee Y.-S."/>
        </authorList>
    </citation>
    <scope>NUCLEOTIDE SEQUENCE [LARGE SCALE GENOMIC DNA]</scope>
    <source>
        <strain>SC-B67</strain>
    </source>
</reference>
<evidence type="ECO:0000255" key="1">
    <source>
        <dbReference type="HAMAP-Rule" id="MF_00228"/>
    </source>
</evidence>
<organism>
    <name type="scientific">Salmonella choleraesuis (strain SC-B67)</name>
    <dbReference type="NCBI Taxonomy" id="321314"/>
    <lineage>
        <taxon>Bacteria</taxon>
        <taxon>Pseudomonadati</taxon>
        <taxon>Pseudomonadota</taxon>
        <taxon>Gammaproteobacteria</taxon>
        <taxon>Enterobacterales</taxon>
        <taxon>Enterobacteriaceae</taxon>
        <taxon>Salmonella</taxon>
    </lineage>
</organism>
<name>THIM_SALCH</name>
<proteinExistence type="inferred from homology"/>
<sequence length="265" mass="27475">MQPDLHCRTLAAHTLKHFRALSPLTHCMTNDVVQTFTANTLLALGASPAMVIDPVEARPFAAIANALLVNVGTLTASRADAMRAAVESAYDAKTPWTLDPVAVGALEFRRRFCLDLLSLRPAAIRGNASEILALSGMALGGRGVDTTEAALAALPAAQALAHQIDCIVVVTGEIDYVTNGQRTLSIPGGDPLMTRIVGTGCALSAVVAASCALPGAALDNVASACCWMKLAGQAAAERSEGPGSFIPAFLDALYHLDVEAANEEN</sequence>
<accession>Q57MJ3</accession>
<dbReference type="EC" id="2.7.1.50" evidence="1"/>
<dbReference type="EMBL" id="AE017220">
    <property type="protein sequence ID" value="AAX66068.1"/>
    <property type="molecule type" value="Genomic_DNA"/>
</dbReference>
<dbReference type="RefSeq" id="WP_001540411.1">
    <property type="nucleotide sequence ID" value="NC_006905.1"/>
</dbReference>
<dbReference type="SMR" id="Q57MJ3"/>
<dbReference type="KEGG" id="sec:SCH_2162"/>
<dbReference type="HOGENOM" id="CLU_019943_0_1_6"/>
<dbReference type="UniPathway" id="UPA00060">
    <property type="reaction ID" value="UER00139"/>
</dbReference>
<dbReference type="Proteomes" id="UP000000538">
    <property type="component" value="Chromosome"/>
</dbReference>
<dbReference type="GO" id="GO:0005524">
    <property type="term" value="F:ATP binding"/>
    <property type="evidence" value="ECO:0007669"/>
    <property type="project" value="UniProtKB-UniRule"/>
</dbReference>
<dbReference type="GO" id="GO:0004417">
    <property type="term" value="F:hydroxyethylthiazole kinase activity"/>
    <property type="evidence" value="ECO:0007669"/>
    <property type="project" value="UniProtKB-UniRule"/>
</dbReference>
<dbReference type="GO" id="GO:0000287">
    <property type="term" value="F:magnesium ion binding"/>
    <property type="evidence" value="ECO:0007669"/>
    <property type="project" value="UniProtKB-UniRule"/>
</dbReference>
<dbReference type="GO" id="GO:0009228">
    <property type="term" value="P:thiamine biosynthetic process"/>
    <property type="evidence" value="ECO:0007669"/>
    <property type="project" value="UniProtKB-KW"/>
</dbReference>
<dbReference type="GO" id="GO:0009229">
    <property type="term" value="P:thiamine diphosphate biosynthetic process"/>
    <property type="evidence" value="ECO:0007669"/>
    <property type="project" value="UniProtKB-UniRule"/>
</dbReference>
<dbReference type="CDD" id="cd01170">
    <property type="entry name" value="THZ_kinase"/>
    <property type="match status" value="1"/>
</dbReference>
<dbReference type="FunFam" id="3.40.1190.20:FF:000015">
    <property type="entry name" value="Hydroxyethylthiazole kinase"/>
    <property type="match status" value="1"/>
</dbReference>
<dbReference type="Gene3D" id="3.40.1190.20">
    <property type="match status" value="1"/>
</dbReference>
<dbReference type="HAMAP" id="MF_00228">
    <property type="entry name" value="Thz_kinase"/>
    <property type="match status" value="1"/>
</dbReference>
<dbReference type="InterPro" id="IPR000417">
    <property type="entry name" value="Hyethyz_kinase"/>
</dbReference>
<dbReference type="InterPro" id="IPR029056">
    <property type="entry name" value="Ribokinase-like"/>
</dbReference>
<dbReference type="NCBIfam" id="NF006830">
    <property type="entry name" value="PRK09355.1"/>
    <property type="match status" value="1"/>
</dbReference>
<dbReference type="NCBIfam" id="TIGR00694">
    <property type="entry name" value="thiM"/>
    <property type="match status" value="1"/>
</dbReference>
<dbReference type="Pfam" id="PF02110">
    <property type="entry name" value="HK"/>
    <property type="match status" value="1"/>
</dbReference>
<dbReference type="PIRSF" id="PIRSF000513">
    <property type="entry name" value="Thz_kinase"/>
    <property type="match status" value="1"/>
</dbReference>
<dbReference type="PRINTS" id="PR01099">
    <property type="entry name" value="HYETHTZKNASE"/>
</dbReference>
<dbReference type="SUPFAM" id="SSF53613">
    <property type="entry name" value="Ribokinase-like"/>
    <property type="match status" value="1"/>
</dbReference>
<feature type="chain" id="PRO_1000021525" description="Hydroxyethylthiazole kinase">
    <location>
        <begin position="1"/>
        <end position="265"/>
    </location>
</feature>
<feature type="binding site" evidence="1">
    <location>
        <position position="50"/>
    </location>
    <ligand>
        <name>substrate</name>
    </ligand>
</feature>
<feature type="binding site" evidence="1">
    <location>
        <position position="125"/>
    </location>
    <ligand>
        <name>ATP</name>
        <dbReference type="ChEBI" id="CHEBI:30616"/>
    </ligand>
</feature>
<feature type="binding site" evidence="1">
    <location>
        <position position="171"/>
    </location>
    <ligand>
        <name>ATP</name>
        <dbReference type="ChEBI" id="CHEBI:30616"/>
    </ligand>
</feature>
<feature type="binding site" evidence="1">
    <location>
        <position position="198"/>
    </location>
    <ligand>
        <name>substrate</name>
    </ligand>
</feature>
<gene>
    <name evidence="1" type="primary">thiM</name>
    <name type="ordered locus">SCH_2162</name>
</gene>
<comment type="function">
    <text evidence="1">Catalyzes the phosphorylation of the hydroxyl group of 4-methyl-5-beta-hydroxyethylthiazole (THZ).</text>
</comment>
<comment type="catalytic activity">
    <reaction evidence="1">
        <text>5-(2-hydroxyethyl)-4-methylthiazole + ATP = 4-methyl-5-(2-phosphooxyethyl)-thiazole + ADP + H(+)</text>
        <dbReference type="Rhea" id="RHEA:24212"/>
        <dbReference type="ChEBI" id="CHEBI:15378"/>
        <dbReference type="ChEBI" id="CHEBI:17957"/>
        <dbReference type="ChEBI" id="CHEBI:30616"/>
        <dbReference type="ChEBI" id="CHEBI:58296"/>
        <dbReference type="ChEBI" id="CHEBI:456216"/>
        <dbReference type="EC" id="2.7.1.50"/>
    </reaction>
</comment>
<comment type="cofactor">
    <cofactor evidence="1">
        <name>Mg(2+)</name>
        <dbReference type="ChEBI" id="CHEBI:18420"/>
    </cofactor>
</comment>
<comment type="pathway">
    <text evidence="1">Cofactor biosynthesis; thiamine diphosphate biosynthesis; 4-methyl-5-(2-phosphoethyl)-thiazole from 5-(2-hydroxyethyl)-4-methylthiazole: step 1/1.</text>
</comment>
<comment type="similarity">
    <text evidence="1">Belongs to the Thz kinase family.</text>
</comment>